<protein>
    <recommendedName>
        <fullName evidence="35">Cell adhesion molecule 1</fullName>
    </recommendedName>
    <alternativeName>
        <fullName>Immunoglobulin superfamily member 4</fullName>
        <shortName>IgSF4</shortName>
    </alternativeName>
    <alternativeName>
        <fullName>Nectin-like protein 2</fullName>
        <shortName>NECL-2</shortName>
    </alternativeName>
    <alternativeName>
        <fullName>Spermatogenic immunoglobulin superfamily</fullName>
        <shortName>SgIgSF</shortName>
    </alternativeName>
    <alternativeName>
        <fullName>Synaptic cell adhesion molecule</fullName>
        <shortName>SynCAM</shortName>
    </alternativeName>
    <alternativeName>
        <fullName>Tumor suppressor in lung cancer 1</fullName>
        <shortName>TSLC-1</shortName>
    </alternativeName>
</protein>
<gene>
    <name evidence="43" type="primary">Cadm1</name>
    <name evidence="31" type="synonym">Igsf4</name>
    <name type="synonym">Necl2</name>
    <name type="synonym">Ra175</name>
    <name evidence="28" type="synonym">Syncam</name>
    <name evidence="35" type="synonym">SynCam1</name>
    <name type="synonym">Tslc1</name>
</gene>
<sequence>MASAVLPSGSQCAAAAAVAAAAAPPGLRLRLLLLLLSAAALIPTGDGQNLFTKDVTVIEGEVATISCQVNKSDDSVIQLLNPNRQTIYFRDFRPLKDSRFQLLNFSSSELKVSLTNVSISDEGRYFCQLYTDPPQESYTTITVLVPPRNLMIDIQKDTAVEGEEIEVNCTAMASKPATTIRWFKGNKELKGKSEVEEWSDMYTVTSQLMLKVHKEDDGVPVICQVEHPAVTGNLQTQRYLEVQYKPQVHIQMTYPLQGLTREGDAFELTCEAIGKPQPVMVTWVRVDDEMPQHAVLSGPNLFINNLNKTDNGTYRCEASNIVGKAHSDYMLYVYDPPTTIPPPTTTTTTTTTTTTTILTIITDTTATTEPAVHDSRAGEEGTIGAVDHAVIGGVVAVVVFAMLCLLIILGRYFARHKGTYFTHEAKGADDAADADTAIINAEGGQNNSEEKKEYFI</sequence>
<evidence type="ECO:0000250" key="1"/>
<evidence type="ECO:0000250" key="2">
    <source>
        <dbReference type="UniProtKB" id="Q6AYP5"/>
    </source>
</evidence>
<evidence type="ECO:0000250" key="3">
    <source>
        <dbReference type="UniProtKB" id="Q9BY67"/>
    </source>
</evidence>
<evidence type="ECO:0000255" key="4"/>
<evidence type="ECO:0000255" key="5">
    <source>
        <dbReference type="PROSITE-ProRule" id="PRU00114"/>
    </source>
</evidence>
<evidence type="ECO:0000269" key="6">
    <source>
    </source>
</evidence>
<evidence type="ECO:0000269" key="7">
    <source>
    </source>
</evidence>
<evidence type="ECO:0000269" key="8">
    <source>
    </source>
</evidence>
<evidence type="ECO:0000269" key="9">
    <source>
    </source>
</evidence>
<evidence type="ECO:0000269" key="10">
    <source>
    </source>
</evidence>
<evidence type="ECO:0000269" key="11">
    <source>
    </source>
</evidence>
<evidence type="ECO:0000269" key="12">
    <source>
    </source>
</evidence>
<evidence type="ECO:0000269" key="13">
    <source>
    </source>
</evidence>
<evidence type="ECO:0000269" key="14">
    <source>
    </source>
</evidence>
<evidence type="ECO:0000269" key="15">
    <source>
    </source>
</evidence>
<evidence type="ECO:0000269" key="16">
    <source>
    </source>
</evidence>
<evidence type="ECO:0000269" key="17">
    <source>
    </source>
</evidence>
<evidence type="ECO:0000269" key="18">
    <source>
    </source>
</evidence>
<evidence type="ECO:0000269" key="19">
    <source>
    </source>
</evidence>
<evidence type="ECO:0000269" key="20">
    <source>
    </source>
</evidence>
<evidence type="ECO:0000269" key="21">
    <source>
    </source>
</evidence>
<evidence type="ECO:0000269" key="22">
    <source>
    </source>
</evidence>
<evidence type="ECO:0000269" key="23">
    <source>
    </source>
</evidence>
<evidence type="ECO:0000269" key="24">
    <source>
    </source>
</evidence>
<evidence type="ECO:0000269" key="25">
    <source>
    </source>
</evidence>
<evidence type="ECO:0000269" key="26">
    <source ref="6"/>
</evidence>
<evidence type="ECO:0000269" key="27">
    <source ref="7"/>
</evidence>
<evidence type="ECO:0000303" key="28">
    <source>
    </source>
</evidence>
<evidence type="ECO:0000303" key="29">
    <source>
    </source>
</evidence>
<evidence type="ECO:0000303" key="30">
    <source>
    </source>
</evidence>
<evidence type="ECO:0000303" key="31">
    <source>
    </source>
</evidence>
<evidence type="ECO:0000303" key="32">
    <source>
    </source>
</evidence>
<evidence type="ECO:0000303" key="33">
    <source ref="6"/>
</evidence>
<evidence type="ECO:0000303" key="34">
    <source ref="7"/>
</evidence>
<evidence type="ECO:0000305" key="35"/>
<evidence type="ECO:0000312" key="36">
    <source>
        <dbReference type="EMBL" id="AAC67243.1"/>
    </source>
</evidence>
<evidence type="ECO:0000312" key="37">
    <source>
        <dbReference type="EMBL" id="AAL86736.1"/>
    </source>
</evidence>
<evidence type="ECO:0000312" key="38">
    <source>
        <dbReference type="EMBL" id="AAN01614.1"/>
    </source>
</evidence>
<evidence type="ECO:0000312" key="39">
    <source>
        <dbReference type="EMBL" id="AAQ02381.1"/>
    </source>
</evidence>
<evidence type="ECO:0000312" key="40">
    <source>
        <dbReference type="EMBL" id="BAA87914.1"/>
    </source>
</evidence>
<evidence type="ECO:0000312" key="41">
    <source>
        <dbReference type="EMBL" id="BAB83501.2"/>
    </source>
</evidence>
<evidence type="ECO:0000312" key="42">
    <source>
        <dbReference type="EMBL" id="BAC66173.1"/>
    </source>
</evidence>
<evidence type="ECO:0000312" key="43">
    <source>
        <dbReference type="MGI" id="MGI:1889272"/>
    </source>
</evidence>
<evidence type="ECO:0007744" key="44">
    <source>
    </source>
</evidence>
<evidence type="ECO:0007744" key="45">
    <source>
    </source>
</evidence>
<organism>
    <name type="scientific">Mus musculus</name>
    <name type="common">Mouse</name>
    <dbReference type="NCBI Taxonomy" id="10090"/>
    <lineage>
        <taxon>Eukaryota</taxon>
        <taxon>Metazoa</taxon>
        <taxon>Chordata</taxon>
        <taxon>Craniata</taxon>
        <taxon>Vertebrata</taxon>
        <taxon>Euteleostomi</taxon>
        <taxon>Mammalia</taxon>
        <taxon>Eutheria</taxon>
        <taxon>Euarchontoglires</taxon>
        <taxon>Glires</taxon>
        <taxon>Rodentia</taxon>
        <taxon>Myomorpha</taxon>
        <taxon>Muroidea</taxon>
        <taxon>Muridae</taxon>
        <taxon>Murinae</taxon>
        <taxon>Mus</taxon>
        <taxon>Mus</taxon>
    </lineage>
</organism>
<feature type="signal peptide" evidence="4">
    <location>
        <begin position="1"/>
        <end position="47"/>
    </location>
</feature>
<feature type="chain" id="PRO_0000291969" description="Cell adhesion molecule 1" evidence="4">
    <location>
        <begin position="48"/>
        <end position="456"/>
    </location>
</feature>
<feature type="topological domain" description="Extracellular" evidence="4">
    <location>
        <begin position="48"/>
        <end position="388"/>
    </location>
</feature>
<feature type="transmembrane region" description="Helical" evidence="4">
    <location>
        <begin position="389"/>
        <end position="409"/>
    </location>
</feature>
<feature type="topological domain" description="Cytoplasmic" evidence="4">
    <location>
        <begin position="410"/>
        <end position="456"/>
    </location>
</feature>
<feature type="domain" description="Ig-like V-type" evidence="4">
    <location>
        <begin position="48"/>
        <end position="142"/>
    </location>
</feature>
<feature type="domain" description="Ig-like C2-type 1" evidence="4">
    <location>
        <begin position="147"/>
        <end position="241"/>
    </location>
</feature>
<feature type="domain" description="Ig-like C2-type 2" evidence="4">
    <location>
        <begin position="246"/>
        <end position="332"/>
    </location>
</feature>
<feature type="modified residue" description="Phosphothreonine" evidence="45">
    <location>
        <position position="436"/>
    </location>
</feature>
<feature type="modified residue" description="Phosphoserine" evidence="44">
    <location>
        <position position="448"/>
    </location>
</feature>
<feature type="glycosylation site" description="N-linked (GlcNAc...) asparagine" evidence="20 23">
    <location>
        <position position="70"/>
    </location>
</feature>
<feature type="glycosylation site" description="N-linked (GlcNAc...) asparagine" evidence="20 21 23">
    <location>
        <position position="104"/>
    </location>
</feature>
<feature type="glycosylation site" description="N-linked (GlcNAc...) asparagine" evidence="20 21">
    <location>
        <position position="116"/>
    </location>
</feature>
<feature type="glycosylation site" description="N-linked (GlcNAc...) asparagine" evidence="20">
    <location>
        <position position="168"/>
    </location>
</feature>
<feature type="glycosylation site" description="N-linked (GlcNAc...) asparagine" evidence="20">
    <location>
        <position position="307"/>
    </location>
</feature>
<feature type="glycosylation site" description="N-linked (GlcNAc...) asparagine" evidence="20">
    <location>
        <position position="311"/>
    </location>
</feature>
<feature type="disulfide bond" evidence="5">
    <location>
        <begin position="67"/>
        <end position="127"/>
    </location>
</feature>
<feature type="disulfide bond" evidence="5">
    <location>
        <begin position="169"/>
        <end position="223"/>
    </location>
</feature>
<feature type="disulfide bond" evidence="5">
    <location>
        <begin position="270"/>
        <end position="316"/>
    </location>
</feature>
<feature type="splice variant" id="VSP_052463" description="In isoform 6 and isoform 7." evidence="30 33 34">
    <location>
        <begin position="1"/>
        <end position="150"/>
    </location>
</feature>
<feature type="splice variant" id="VSP_052464" description="In isoform 5." evidence="32 33 34">
    <original>DP</original>
    <variation>GT</variation>
    <location>
        <begin position="335"/>
        <end position="336"/>
    </location>
</feature>
<feature type="splice variant" id="VSP_052465" description="In isoform 4." evidence="31 34">
    <location>
        <begin position="336"/>
        <end position="374"/>
    </location>
</feature>
<feature type="splice variant" id="VSP_052466" description="In isoform 3." evidence="30 34">
    <location>
        <begin position="336"/>
        <end position="363"/>
    </location>
</feature>
<feature type="splice variant" id="VSP_052467" description="In isoform 7." evidence="30 34">
    <location>
        <begin position="336"/>
        <end position="352"/>
    </location>
</feature>
<feature type="splice variant" id="VSP_052468" description="In isoform 5." evidence="32 33 34">
    <location>
        <begin position="337"/>
        <end position="456"/>
    </location>
</feature>
<feature type="splice variant" id="VSP_052469" description="In isoform 6." evidence="30 33">
    <location>
        <begin position="355"/>
        <end position="365"/>
    </location>
</feature>
<feature type="splice variant" id="VSP_052470" description="In isoform 2." evidence="28 29 32 34">
    <location>
        <begin position="364"/>
        <end position="374"/>
    </location>
</feature>
<feature type="sequence conflict" description="In Ref. 2; AAN01614 and 7; BAD30018." evidence="35" ref="2 7">
    <original>S</original>
    <variation>C</variation>
    <location>
        <position position="8"/>
    </location>
</feature>
<feature type="sequence conflict" description="In Ref. 3; BAA87914/BAA87915." evidence="35" ref="3">
    <original>F</original>
    <variation>L</variation>
    <location>
        <position position="266"/>
    </location>
</feature>
<feature type="sequence conflict" description="In Ref. 3; BAA87914/BAA87915." evidence="35" ref="3">
    <original>R</original>
    <variation>P</variation>
    <location>
        <position position="315"/>
    </location>
</feature>
<feature type="sequence conflict" description="In Ref. 3; BAA87914/BAA87915." evidence="35" ref="3">
    <original>M</original>
    <variation>I</variation>
    <location>
        <position position="330"/>
    </location>
</feature>
<feature type="sequence conflict" description="In Ref. 2; AAN01614 and 7; BAD30018." evidence="35" ref="2 7">
    <original>T</original>
    <variation>S</variation>
    <location>
        <position position="356"/>
    </location>
</feature>
<feature type="sequence conflict" description="In Ref. 3; BAB83501." evidence="35" ref="3">
    <original>D</original>
    <variation>N</variation>
    <location>
        <position position="429"/>
    </location>
</feature>
<accession>Q8R5M8</accession>
<accession>Q6F3J3</accession>
<accession>Q7TNL1</accession>
<accession>Q80VG4</accession>
<accession>Q8K3T6</accession>
<accession>Q8R4L1</accession>
<accession>Q9QYL5</accession>
<accession>Q9QYL6</accession>
<accession>Q9Z2H8</accession>
<keyword id="KW-0025">Alternative splicing</keyword>
<keyword id="KW-0053">Apoptosis</keyword>
<keyword id="KW-0130">Cell adhesion</keyword>
<keyword id="KW-1003">Cell membrane</keyword>
<keyword id="KW-0217">Developmental protein</keyword>
<keyword id="KW-0221">Differentiation</keyword>
<keyword id="KW-1015">Disulfide bond</keyword>
<keyword id="KW-0325">Glycoprotein</keyword>
<keyword id="KW-0391">Immunity</keyword>
<keyword id="KW-0393">Immunoglobulin domain</keyword>
<keyword id="KW-0472">Membrane</keyword>
<keyword id="KW-0597">Phosphoprotein</keyword>
<keyword id="KW-1185">Reference proteome</keyword>
<keyword id="KW-0677">Repeat</keyword>
<keyword id="KW-0732">Signal</keyword>
<keyword id="KW-0744">Spermatogenesis</keyword>
<keyword id="KW-0770">Synapse</keyword>
<keyword id="KW-0812">Transmembrane</keyword>
<keyword id="KW-1133">Transmembrane helix</keyword>
<keyword id="KW-0043">Tumor suppressor</keyword>
<proteinExistence type="evidence at protein level"/>
<comment type="function">
    <text evidence="3 6 8 9 10 11 12 14 17 19 22 24 25">Mediates homophilic cell-cell adhesion in a Ca(2+)-independent manner (PubMed:12202822, PubMed:12799182, PubMed:12826663). Also mediates heterophilic cell-cell adhesion with CADM3 and NECTIN3 in a Ca(2+)-independent manner (PubMed:12826663). Interaction with CRTAM promotes natural killer (NK) cell cytotoxicity and interferon-gamma (IFN-gamma) secretion by CD8+ T-cells in vitro as well as NK cell-mediated rejection of tumors expressing CADM1 in vivo (PubMed:15811952). In mast cells, may mediate attachment to and promote communication with nerves (By similarity). CADM1, together with MITF, is essential for development and survival of mast cells in vivo (PubMed:15158462, PubMed:16605125). By interacting with CRTAM and thus promoting the adhesion between CD8+ T-cells and CD8+ dendritic cells, regulates the retention of activated CD8+ T-cell within the draining lymph node (PubMed:19752223). Required for the intestinal retention of intraepithelial CD4+ CD8+ T-cells and, to a lesser extent, intraepithelial and lamina propria CD8+ T-cells and CD4+ T-cells (PubMed:24687959). Interaction with CRTAM promotes the adhesion to gut-associated CD103+ dendritic cells, which may facilitate the expression of gut-homing and adhesion molecules on T-cells and the conversion of CD4+ T-cells into CD4+ CD8+ T-cells (PubMed:24687959). Acts as a synaptic cell adhesion molecule and plays a role in the formation of dendritic spines and in synapse assembly (PubMed:12202822, PubMed:23209303). May be involved in neuronal migration, axon growth, pathfinding, and fasciculation on the axons of differentiating neurons (PubMed:15707673). May play diverse roles in the spermatogenesis including in the adhesion of spermatocytes and spermatids to Sertoli cells and for their normal differentiation into mature spermatozoa (PubMed:12606335, PubMed:16612000).</text>
</comment>
<comment type="subunit">
    <text evidence="2 3 10 13 14 24">Homodimer (via Ig-like V-type domain) (By similarity). Interacts with FARP1 (PubMed:23209303). Interacts (via Ig-like V-type domain) with CRTAM (via Ig-like V-type domain); the interaction competes with CRTAM homodimerization and CADM1 homodimerization (PubMed:15781451, PubMed:15811952). Interacts (via C-terminus) with EPB41L3/DAL1 (By similarity). The interaction with EPB41L3/DAL1 may act to anchor CADM1 to the actin cytoskeleton (By similarity). Interacts (via C-terminus) with MPP2 (via PDZ domain) (By similarity). Interacts (via C-terminus) with MPP3 (via PDZ domain); this interaction connects CADM1 with DLG1 (By similarity). Interacts (via C-terminus) with PALS2 (via PDZ domain) (PubMed:12826663).</text>
</comment>
<comment type="interaction">
    <interactant intactId="EBI-5651941">
        <id>Q8R5M8-2</id>
    </interactant>
    <interactant intactId="EBI-948678">
        <id>P16144</id>
        <label>ITGB4</label>
    </interactant>
    <organismsDiffer>true</organismsDiffer>
    <experiments>3</experiments>
</comment>
<comment type="subcellular location">
    <subcellularLocation>
        <location evidence="10 22 23 25">Cell membrane</location>
        <topology evidence="10 23">Single-pass type I membrane protein</topology>
    </subcellularLocation>
    <subcellularLocation>
        <location evidence="23 24">Synaptic cell membrane</location>
        <topology evidence="35">Single-pass type I membrane protein</topology>
    </subcellularLocation>
    <text evidence="10">Localized to the basolateral plasma membrane of epithelial cells in gall bladder.</text>
</comment>
<comment type="alternative products">
    <event type="alternative splicing"/>
    <isoform>
        <id>Q8R5M8-1</id>
        <name evidence="9">1</name>
        <sequence type="displayed"/>
    </isoform>
    <isoform>
        <id>Q8R5M8-2</id>
        <name evidence="6 7 15 27">2</name>
        <sequence type="described" ref="VSP_052470"/>
    </isoform>
    <isoform>
        <id>Q8R5M8-3</id>
        <name evidence="27">3</name>
        <sequence type="described" ref="VSP_052466"/>
    </isoform>
    <isoform>
        <id>Q8R5M8-4</id>
        <name evidence="10 27">4</name>
        <sequence type="described" ref="VSP_052465"/>
    </isoform>
    <isoform>
        <id>Q8R5M8-5</id>
        <name evidence="26 27">5</name>
        <sequence type="described" ref="VSP_052464 VSP_052468"/>
    </isoform>
    <isoform>
        <id>Q8R5M8-6</id>
        <name evidence="9">6</name>
        <sequence type="described" ref="VSP_052463 VSP_052469"/>
    </isoform>
    <isoform>
        <id>Q8R5M8-7</id>
        <name evidence="9">7</name>
        <sequence type="described" ref="VSP_052463 VSP_052467"/>
    </isoform>
</comment>
<comment type="tissue specificity">
    <text evidence="6 7 8 10 22 25">Expressed dominantly in epithelial cells but not expressed in fibroblast cells (at protein level) (PubMed:12826663). Expressed in the T-cell area of lymph nodes, specifically in CD8+ and CD4- CD8- dendritic cells (at protein level) (PubMed:19752223). Expressed in CD8+ dendritic cells in the spleen (at protein level) (PubMed:19752223). Expressed in CD103+ dendritic cells in the small intestine lamina propria and mesenteric lymph nodes (at protein level) (PubMed:24687959). Expressed in brain, lung, kidney, testis, heart, spleen and liver, but not expressed in skeletal muscle (PubMed:12202822, PubMed:12242005, PubMed:12606335).</text>
</comment>
<comment type="developmental stage">
    <text evidence="8">Expressed in spermatogenic cells during early spermatogenesis. Expression increases in intermediate spermatogonia through to zygotene spermatocytes but becomes diminished in the steps from early pachytene spermatocytes through to round spermatids. After meiosis, expression reappears in spermatids and is present in elongating spermatids until spermiation. Not detected in Sertoli cells.</text>
</comment>
<comment type="domain">
    <text evidence="3">The cytoplasmic domain appears to play a critical role in proapoptosis and tumor suppressor activity in NSCLC.</text>
</comment>
<comment type="PTM">
    <text evidence="8 20 21 23">N-glycosylated.</text>
</comment>
<comment type="PTM">
    <text evidence="1">Glycosylation at Asn-70 and Asn-104 promotes adhesive binding and synapse induction.</text>
</comment>
<comment type="disruption phenotype">
    <text evidence="16 18 19 25">Male mice are infertile, due to a defect at the spermatid stage of spermatogenesis, and show oligoasthenoteratozoospermia with almost no mature motile spermatozoa in the epididymis (PubMed:16382161, PubMed:16611999, PubMed:16612000). Heterozygous males and females and homozygous null females are fertile and have no overt developmental defects (PubMed:16382161, PubMed:16611999, PubMed:16612000). In the small intestine mucosa and under steady-state conditions, severe reduction in the number of intraepithelial CD4+ CD8+ T-cells and, partial reduction in the number of lamina propria and intraepithelial CD8+ and CD4+ T-cells (PubMed:24687959).</text>
</comment>
<comment type="similarity">
    <text evidence="35">Belongs to the nectin family.</text>
</comment>
<comment type="sequence caution" evidence="35">
    <conflict type="frameshift">
        <sequence resource="EMBL-CDS" id="AAC67243"/>
    </conflict>
</comment>
<name>CADM1_MOUSE</name>
<reference evidence="35 37" key="1">
    <citation type="journal article" date="2002" name="Gene">
        <title>Identification of the Tslc1 gene, a mouse orthologue of the human tumor suppressor TSLC1 gene.</title>
        <authorList>
            <person name="Fukami T."/>
            <person name="Satoh H."/>
            <person name="Fujita E."/>
            <person name="Maruyama T."/>
            <person name="Fukuhara H."/>
            <person name="Kuramochi M."/>
            <person name="Takamoto S."/>
            <person name="Momoi T."/>
            <person name="Murakami Y."/>
        </authorList>
    </citation>
    <scope>NUCLEOTIDE SEQUENCE [MRNA] (ISOFORM 2)</scope>
    <scope>TISSUE SPECIFICITY</scope>
    <source>
        <strain evidence="37">129/SvJ</strain>
    </source>
</reference>
<reference evidence="35 38" key="2">
    <citation type="journal article" date="2002" name="Science">
        <title>SynCAM, a synaptic adhesion molecule that drives synapse assembly.</title>
        <authorList>
            <person name="Biederer T."/>
            <person name="Sara Y."/>
            <person name="Mozhayeva M."/>
            <person name="Atasoy D."/>
            <person name="Liu X."/>
            <person name="Kavalali E.T."/>
            <person name="Sudhof T.C."/>
        </authorList>
    </citation>
    <scope>NUCLEOTIDE SEQUENCE [MRNA] (ISOFORM 2)</scope>
    <scope>FUNCTION</scope>
    <scope>TISSUE SPECIFICITY</scope>
    <source>
        <strain evidence="38">C57BL/6J</strain>
    </source>
</reference>
<reference evidence="35 41" key="3">
    <citation type="journal article" date="2003" name="Exp. Cell Res.">
        <title>RA175, which is the mouse ortholog of TSLC1, a tumor suppressor gene in human lung cancer, is a cell adhesion molecule.</title>
        <authorList>
            <person name="Fujita E."/>
            <person name="Soyama A."/>
            <person name="Momoi T."/>
        </authorList>
    </citation>
    <scope>NUCLEOTIDE SEQUENCE [MRNA] (ISOFORMS 1; 6 AND 7)</scope>
    <scope>FUNCTION</scope>
    <source>
        <tissue evidence="40">Embryonic carcinoma</tissue>
    </source>
</reference>
<reference evidence="35 39" key="4">
    <citation type="journal article" date="2003" name="J. Biol. Chem.">
        <title>Implications of nectin-like molecule-2/IGSF4/RA175/SgIGSF/TSLC1/SynCAM1 in cell-cell adhesion and transmembrane protein localization in epithelial cells.</title>
        <authorList>
            <person name="Shingai T."/>
            <person name="Ikeda W."/>
            <person name="Kakunaga S."/>
            <person name="Morimoto K."/>
            <person name="Takekuni K."/>
            <person name="Itoh S."/>
            <person name="Satoh K."/>
            <person name="Takeuchi M."/>
            <person name="Imai T."/>
            <person name="Monden M."/>
            <person name="Takai Y."/>
        </authorList>
    </citation>
    <scope>NUCLEOTIDE SEQUENCE [MRNA] (ISOFORM 4)</scope>
    <scope>FUNCTION</scope>
    <scope>INTERACTION WITH PALS2</scope>
    <scope>SUBCELLULAR LOCATION</scope>
    <scope>TISSUE SPECIFICITY</scope>
    <source>
        <strain evidence="39">C57BL/6J</strain>
        <tissue evidence="39">Brain</tissue>
    </source>
</reference>
<reference evidence="35 36" key="5">
    <citation type="journal article" date="2005" name="Biochim. Biophys. Acta">
        <title>Nectin-like molecule 1 is a protein 4.1N associated protein and recruits protein 4.1N from cytoplasm to the plasma membrane.</title>
        <authorList>
            <person name="Zhou Y."/>
            <person name="Du G."/>
            <person name="Hu X."/>
            <person name="Yu S."/>
            <person name="Liu Y."/>
            <person name="Xu Y."/>
            <person name="Huang X."/>
            <person name="Liu J."/>
            <person name="Yin B."/>
            <person name="Fan M."/>
            <person name="Peng X."/>
            <person name="Qiang B."/>
            <person name="Yuan J."/>
        </authorList>
    </citation>
    <scope>NUCLEOTIDE SEQUENCE [MRNA] OF 49-456 (ISOFORM 2)</scope>
</reference>
<reference evidence="35 42" key="6">
    <citation type="submission" date="2002-09" db="EMBL/GenBank/DDBJ databases">
        <title>A secretion form of SgIGSF/TSLC1.</title>
        <authorList>
            <person name="Ito A."/>
            <person name="Koma Y."/>
            <person name="Nagano T."/>
        </authorList>
    </citation>
    <scope>NUCLEOTIDE SEQUENCE [MRNA] (ISOFORM 5)</scope>
    <source>
        <strain evidence="42">C57BL/6J</strain>
        <tissue evidence="42">Mast cell</tissue>
    </source>
</reference>
<reference evidence="35 42" key="7">
    <citation type="submission" date="2004-07" db="EMBL/GenBank/DDBJ databases">
        <title>Neuron-specific isoforms of RA175/TSLC1/SynCAM.</title>
        <authorList>
            <person name="Fujita E."/>
            <person name="Aikawa K."/>
            <person name="Momoi T."/>
        </authorList>
    </citation>
    <scope>NUCLEOTIDE SEQUENCE [MRNA] (ISOFORMS 2; 3; 4 AND 5)</scope>
</reference>
<reference evidence="35" key="8">
    <citation type="journal article" date="2003" name="Biol. Reprod.">
        <title>Expression and functional characterization of the adhesion molecule spermatogenic immunoglobulin superfamily in the mouse testis.</title>
        <authorList>
            <person name="Wakayama T."/>
            <person name="Koami H."/>
            <person name="Ariga H."/>
            <person name="Kobayashi D."/>
            <person name="Sai Y."/>
            <person name="Tsuji A."/>
            <person name="Yamamoto M."/>
            <person name="Iseki S."/>
        </authorList>
    </citation>
    <scope>FUNCTION</scope>
    <scope>TISSUE SPECIFICITY</scope>
    <scope>DEVELOPMENTAL STAGE</scope>
    <scope>GLYCOSYLATION</scope>
</reference>
<reference evidence="35" key="9">
    <citation type="journal article" date="2004" name="Biochem. Biophys. Res. Commun.">
        <title>Contribution of the SgIGSF adhesion molecule to survival of cultured mast cells in vivo.</title>
        <authorList>
            <person name="Ito A."/>
            <person name="Koma Y."/>
            <person name="Watabe K."/>
            <person name="Jippo T."/>
            <person name="Wakayama T."/>
            <person name="Iseki S."/>
            <person name="Kitamura Y."/>
        </authorList>
    </citation>
    <scope>FUNCTION</scope>
</reference>
<reference evidence="35" key="10">
    <citation type="journal article" date="2005" name="Blood">
        <title>The tumor suppressor TSLC1/NECL-2 triggers NK-cell and CD8+ T-cell responses through the cell-surface receptor CRTAM.</title>
        <authorList>
            <person name="Boles K.S."/>
            <person name="Barchet W."/>
            <person name="Diacovo T."/>
            <person name="Cella M."/>
            <person name="Colonna M."/>
        </authorList>
    </citation>
    <scope>FUNCTION</scope>
    <scope>INTERACTION WITH CADM1</scope>
</reference>
<reference evidence="35" key="11">
    <citation type="journal article" date="2005" name="Brain Res. Dev. Brain Res.">
        <title>Distribution of RA175/TSLC1/SynCAM, a member of the immunoglobulin superfamily, in the developing nervous system.</title>
        <authorList>
            <person name="Fujita E."/>
            <person name="Urase K."/>
            <person name="Soyama A."/>
            <person name="Kouroku Y."/>
            <person name="Momoi T."/>
        </authorList>
    </citation>
    <scope>FUNCTION</scope>
</reference>
<reference evidence="35" key="12">
    <citation type="journal article" date="2005" name="J. Biol. Chem.">
        <title>Nectin-like protein 2 defines a subset of T-cell zone dendritic cells and is a ligand for class-I-restricted T-cell-associated molecule.</title>
        <authorList>
            <person name="Galibert L."/>
            <person name="Diemer G.S."/>
            <person name="Liu Z."/>
            <person name="Johnson R.S."/>
            <person name="Smith J.L."/>
            <person name="Walzer T."/>
            <person name="Comeau M.R."/>
            <person name="Rauch C.T."/>
            <person name="Wolfson M.F."/>
            <person name="Sorensen R.A."/>
            <person name="Van der Vuurst de Vries A.-R."/>
            <person name="Branstetter D.G."/>
            <person name="Koelling R.M."/>
            <person name="Scholler J."/>
            <person name="Fanslow W.C."/>
            <person name="Baum P.R."/>
            <person name="Derry J.M."/>
            <person name="Yan W."/>
        </authorList>
    </citation>
    <scope>INTERACTION WITH CRTAM</scope>
</reference>
<reference evidence="35" key="13">
    <citation type="journal article" date="2005" name="Novartis Found. Symp.">
        <title>MITF and SgIGSF: an essential transcription factor and its target adhesion molecule for development and survival of mast cells.</title>
        <authorList>
            <person name="Kitamura Y."/>
        </authorList>
    </citation>
    <scope>FUNCTION</scope>
</reference>
<reference evidence="35" key="14">
    <citation type="journal article" date="2006" name="Mol. Cell. Biol.">
        <title>Oligo-astheno-teratozoospermia in mice lacking RA175/TSLC1/SynCAM/IGSF4A, a cell adhesion molecule in the immunoglobulin superfamily.</title>
        <authorList>
            <person name="Fujita E."/>
            <person name="Kouroku Y."/>
            <person name="Ozeki S."/>
            <person name="Tanabe Y."/>
            <person name="Toyama Y."/>
            <person name="Maekawa M."/>
            <person name="Kojima N."/>
            <person name="Senoo H."/>
            <person name="Toshimori K."/>
            <person name="Momoi T."/>
        </authorList>
    </citation>
    <scope>DISRUPTION PHENOTYPE</scope>
</reference>
<reference evidence="35" key="15">
    <citation type="journal article" date="2006" name="Mol. Cell. Biol.">
        <title>Loss of TSLC1 causes male infertility due to a defect at the spermatid stage of spermatogenesis.</title>
        <authorList>
            <person name="van der Weyden L."/>
            <person name="Arends M.J."/>
            <person name="Chausiaux O.E."/>
            <person name="Ellis P.J."/>
            <person name="Lange U.C."/>
            <person name="Surani M.A."/>
            <person name="Affara N."/>
            <person name="Murakami Y."/>
            <person name="Adams D.J."/>
            <person name="Bradley A."/>
        </authorList>
    </citation>
    <scope>DISRUPTION PHENOTYPE</scope>
</reference>
<reference evidence="35" key="16">
    <citation type="journal article" date="2006" name="Mol. Cell. Biol.">
        <title>Disruption of spermatogenic cell adhesion and male infertility in mice lacking TSLC1/IGSF4, an immunoglobulin superfamily cell adhesion molecule.</title>
        <authorList>
            <person name="Yamada D."/>
            <person name="Yoshida M."/>
            <person name="Williams Y.N."/>
            <person name="Fukami T."/>
            <person name="Kikuchi S."/>
            <person name="Masuda M."/>
            <person name="Maruyama T."/>
            <person name="Ohta T."/>
            <person name="Nakae D."/>
            <person name="Maekawa A."/>
            <person name="Kitamura T."/>
            <person name="Murakami Y."/>
        </authorList>
    </citation>
    <scope>FUNCTION</scope>
    <scope>DISRUPTION PHENOTYPE</scope>
</reference>
<reference key="17">
    <citation type="journal article" date="2009" name="Immunity">
        <title>The phagosomal proteome in interferon-gamma-activated macrophages.</title>
        <authorList>
            <person name="Trost M."/>
            <person name="English L."/>
            <person name="Lemieux S."/>
            <person name="Courcelles M."/>
            <person name="Desjardins M."/>
            <person name="Thibault P."/>
        </authorList>
    </citation>
    <scope>PHOSPHORYLATION [LARGE SCALE ANALYSIS] AT SER-448</scope>
    <scope>IDENTIFICATION BY MASS SPECTROMETRY [LARGE SCALE ANALYSIS]</scope>
</reference>
<reference key="18">
    <citation type="journal article" date="2009" name="J. Immunol.">
        <title>CRTAM confers late-stage activation of CD8+ T cells to regulate retention within lymph node.</title>
        <authorList>
            <person name="Takeuchi A."/>
            <person name="Itoh Y."/>
            <person name="Takumi A."/>
            <person name="Ishihara C."/>
            <person name="Arase N."/>
            <person name="Yokosuka T."/>
            <person name="Koseki H."/>
            <person name="Yamasaki S."/>
            <person name="Takai Y."/>
            <person name="Miyoshi J."/>
            <person name="Ogasawara K."/>
            <person name="Saito T."/>
        </authorList>
    </citation>
    <scope>FUNCTION</scope>
    <scope>SUBCELLULAR LOCATION</scope>
    <scope>TISSUE SPECIFICITY</scope>
</reference>
<reference key="19">
    <citation type="journal article" date="2009" name="Mol. Cell. Proteomics">
        <title>The mouse C2C12 myoblast cell surface N-linked glycoproteome: identification, glycosite occupancy, and membrane orientation.</title>
        <authorList>
            <person name="Gundry R.L."/>
            <person name="Raginski K."/>
            <person name="Tarasova Y."/>
            <person name="Tchernyshyov I."/>
            <person name="Bausch-Fluck D."/>
            <person name="Elliott S.T."/>
            <person name="Boheler K.R."/>
            <person name="Van Eyk J.E."/>
            <person name="Wollscheid B."/>
        </authorList>
    </citation>
    <scope>GLYCOSYLATION [LARGE SCALE ANALYSIS] AT ASN-104 AND ASN-116</scope>
    <source>
        <tissue>Myoblast</tissue>
    </source>
</reference>
<reference key="20">
    <citation type="journal article" date="2009" name="Nat. Biotechnol.">
        <title>Mass-spectrometric identification and relative quantification of N-linked cell surface glycoproteins.</title>
        <authorList>
            <person name="Wollscheid B."/>
            <person name="Bausch-Fluck D."/>
            <person name="Henderson C."/>
            <person name="O'Brien R."/>
            <person name="Bibel M."/>
            <person name="Schiess R."/>
            <person name="Aebersold R."/>
            <person name="Watts J.D."/>
        </authorList>
    </citation>
    <scope>GLYCOSYLATION [LARGE SCALE ANALYSIS] AT ASN-70; ASN-104; ASN-116; ASN-168; ASN-307 AND ASN-311</scope>
</reference>
<reference key="21">
    <citation type="journal article" date="2010" name="Cell">
        <title>A tissue-specific atlas of mouse protein phosphorylation and expression.</title>
        <authorList>
            <person name="Huttlin E.L."/>
            <person name="Jedrychowski M.P."/>
            <person name="Elias J.E."/>
            <person name="Goswami T."/>
            <person name="Rad R."/>
            <person name="Beausoleil S.A."/>
            <person name="Villen J."/>
            <person name="Haas W."/>
            <person name="Sowa M.E."/>
            <person name="Gygi S.P."/>
        </authorList>
    </citation>
    <scope>PHOSPHORYLATION [LARGE SCALE ANALYSIS] AT THR-436</scope>
    <scope>IDENTIFICATION BY MASS SPECTROMETRY [LARGE SCALE ANALYSIS]</scope>
    <source>
        <tissue>Brain</tissue>
        <tissue>Lung</tissue>
        <tissue>Spleen</tissue>
        <tissue>Testis</tissue>
    </source>
</reference>
<reference key="22">
    <citation type="journal article" date="2010" name="J. Biol. Chem.">
        <title>N-glycosylation at the SynCAM (synaptic cell adhesion molecule) immunoglobulin interface modulates synaptic adhesion.</title>
        <authorList>
            <person name="Fogel A.I."/>
            <person name="Li Y."/>
            <person name="Giza J."/>
            <person name="Wang Q."/>
            <person name="Lam T.T."/>
            <person name="Modis Y."/>
            <person name="Biederer T."/>
        </authorList>
    </citation>
    <scope>GLYCOSYLATION AT ASN-70 AND ASN-104</scope>
    <scope>SUBCELLULAR LOCATION</scope>
</reference>
<reference key="23">
    <citation type="journal article" date="2012" name="J. Cell Biol.">
        <title>The novel synaptogenic protein Farp1 links postsynaptic cytoskeletal dynamics and transsynaptic organization.</title>
        <authorList>
            <person name="Cheadle L."/>
            <person name="Biederer T."/>
        </authorList>
    </citation>
    <scope>FUNCTION</scope>
    <scope>SUBCELLULAR LOCATION</scope>
    <scope>INTERACTION WITH FARP1</scope>
</reference>
<reference key="24">
    <citation type="journal article" date="2014" name="J. Exp. Med.">
        <title>CRTAM controls residency of gut CD4+CD8+ T cells in the steady state and maintenance of gut CD4+ Th17 during parasitic infection.</title>
        <authorList>
            <person name="Cortez V.S."/>
            <person name="Cervantes-Barragan L."/>
            <person name="Song C."/>
            <person name="Gilfillan S."/>
            <person name="McDonald K.G."/>
            <person name="Tussiwand R."/>
            <person name="Edelson B.T."/>
            <person name="Murakami Y."/>
            <person name="Murphy K.M."/>
            <person name="Newberry R.D."/>
            <person name="Sibley L.D."/>
            <person name="Colonna M."/>
        </authorList>
    </citation>
    <scope>FUNCTION</scope>
    <scope>SUBCELLULAR LOCATION</scope>
    <scope>TISSUE SPECIFICITY</scope>
    <scope>DISRUPTION PHENOTYPE</scope>
</reference>
<dbReference type="EMBL" id="AF434663">
    <property type="protein sequence ID" value="AAL86736.1"/>
    <property type="molecule type" value="mRNA"/>
</dbReference>
<dbReference type="EMBL" id="AF539424">
    <property type="protein sequence ID" value="AAN01614.1"/>
    <property type="molecule type" value="mRNA"/>
</dbReference>
<dbReference type="EMBL" id="AB021964">
    <property type="protein sequence ID" value="BAA87914.1"/>
    <property type="molecule type" value="mRNA"/>
</dbReference>
<dbReference type="EMBL" id="AB021965">
    <property type="protein sequence ID" value="BAA87915.1"/>
    <property type="molecule type" value="mRNA"/>
</dbReference>
<dbReference type="EMBL" id="AB064265">
    <property type="protein sequence ID" value="BAB83501.2"/>
    <property type="molecule type" value="mRNA"/>
</dbReference>
<dbReference type="EMBL" id="AY351388">
    <property type="protein sequence ID" value="AAQ02381.1"/>
    <property type="molecule type" value="mRNA"/>
</dbReference>
<dbReference type="EMBL" id="AF061260">
    <property type="protein sequence ID" value="AAC67243.1"/>
    <property type="status" value="ALT_FRAME"/>
    <property type="molecule type" value="mRNA"/>
</dbReference>
<dbReference type="EMBL" id="AB092414">
    <property type="protein sequence ID" value="BAC66173.1"/>
    <property type="molecule type" value="mRNA"/>
</dbReference>
<dbReference type="EMBL" id="AB183399">
    <property type="protein sequence ID" value="BAD30018.1"/>
    <property type="molecule type" value="mRNA"/>
</dbReference>
<dbReference type="EMBL" id="AB183400">
    <property type="protein sequence ID" value="BAD30019.1"/>
    <property type="molecule type" value="mRNA"/>
</dbReference>
<dbReference type="EMBL" id="AB183401">
    <property type="protein sequence ID" value="BAD30020.1"/>
    <property type="molecule type" value="mRNA"/>
</dbReference>
<dbReference type="EMBL" id="AB183402">
    <property type="protein sequence ID" value="BAD30021.1"/>
    <property type="molecule type" value="mRNA"/>
</dbReference>
<dbReference type="CCDS" id="CCDS23147.1">
    <molecule id="Q8R5M8-4"/>
</dbReference>
<dbReference type="CCDS" id="CCDS23148.1">
    <molecule id="Q8R5M8-2"/>
</dbReference>
<dbReference type="CCDS" id="CCDS23149.1">
    <molecule id="Q8R5M8-1"/>
</dbReference>
<dbReference type="CCDS" id="CCDS23150.1">
    <molecule id="Q8R5M8-3"/>
</dbReference>
<dbReference type="RefSeq" id="NP_001020771.1">
    <molecule id="Q8R5M8-4"/>
    <property type="nucleotide sequence ID" value="NM_001025600.1"/>
</dbReference>
<dbReference type="RefSeq" id="NP_061240.3">
    <molecule id="Q8R5M8-2"/>
    <property type="nucleotide sequence ID" value="NM_018770.3"/>
</dbReference>
<dbReference type="RefSeq" id="NP_997558.2">
    <molecule id="Q8R5M8-1"/>
    <property type="nucleotide sequence ID" value="NM_207675.2"/>
</dbReference>
<dbReference type="RefSeq" id="NP_997559.1">
    <molecule id="Q8R5M8-3"/>
    <property type="nucleotide sequence ID" value="NM_207676.2"/>
</dbReference>
<dbReference type="SMR" id="Q8R5M8"/>
<dbReference type="BioGRID" id="207729">
    <property type="interactions" value="19"/>
</dbReference>
<dbReference type="CORUM" id="Q8R5M8"/>
<dbReference type="FunCoup" id="Q8R5M8">
    <property type="interactions" value="833"/>
</dbReference>
<dbReference type="IntAct" id="Q8R5M8">
    <property type="interactions" value="3"/>
</dbReference>
<dbReference type="MINT" id="Q8R5M8"/>
<dbReference type="STRING" id="10090.ENSMUSP00000124119"/>
<dbReference type="TCDB" id="8.A.23.1.68">
    <property type="family name" value="the basigin (basigin) family"/>
</dbReference>
<dbReference type="GlyConnect" id="2199">
    <property type="glycosylation" value="4 N-Linked glycans (1 site)"/>
</dbReference>
<dbReference type="GlyCosmos" id="Q8R5M8">
    <property type="glycosylation" value="6 sites, 4 glycans"/>
</dbReference>
<dbReference type="GlyGen" id="Q8R5M8">
    <property type="glycosylation" value="6 sites, 10 N-linked glycans (6 sites)"/>
</dbReference>
<dbReference type="iPTMnet" id="Q8R5M8"/>
<dbReference type="PhosphoSitePlus" id="Q8R5M8"/>
<dbReference type="SwissPalm" id="Q8R5M8"/>
<dbReference type="jPOST" id="Q8R5M8"/>
<dbReference type="PaxDb" id="10090-ENSMUSP00000083073"/>
<dbReference type="PeptideAtlas" id="Q8R5M8"/>
<dbReference type="ProteomicsDB" id="281746">
    <molecule id="Q8R5M8-1"/>
</dbReference>
<dbReference type="ProteomicsDB" id="281747">
    <molecule id="Q8R5M8-2"/>
</dbReference>
<dbReference type="ProteomicsDB" id="281748">
    <molecule id="Q8R5M8-3"/>
</dbReference>
<dbReference type="ProteomicsDB" id="281749">
    <molecule id="Q8R5M8-4"/>
</dbReference>
<dbReference type="ProteomicsDB" id="281750">
    <molecule id="Q8R5M8-5"/>
</dbReference>
<dbReference type="ProteomicsDB" id="281751">
    <molecule id="Q8R5M8-6"/>
</dbReference>
<dbReference type="ProteomicsDB" id="281752">
    <molecule id="Q8R5M8-7"/>
</dbReference>
<dbReference type="ABCD" id="Q8R5M8">
    <property type="antibodies" value="1 sequenced antibody"/>
</dbReference>
<dbReference type="Antibodypedia" id="32257">
    <property type="antibodies" value="635 antibodies from 40 providers"/>
</dbReference>
<dbReference type="DNASU" id="54725"/>
<dbReference type="Ensembl" id="ENSMUST00000034581.4">
    <molecule id="Q8R5M8-4"/>
    <property type="protein sequence ID" value="ENSMUSP00000034581.4"/>
    <property type="gene ID" value="ENSMUSG00000032076.21"/>
</dbReference>
<dbReference type="Ensembl" id="ENSMUST00000085909.9">
    <molecule id="Q8R5M8-1"/>
    <property type="protein sequence ID" value="ENSMUSP00000083073.3"/>
    <property type="gene ID" value="ENSMUSG00000032076.21"/>
</dbReference>
<dbReference type="Ensembl" id="ENSMUST00000114547.8">
    <molecule id="Q8R5M8-2"/>
    <property type="protein sequence ID" value="ENSMUSP00000110194.2"/>
    <property type="gene ID" value="ENSMUSG00000032076.21"/>
</dbReference>
<dbReference type="Ensembl" id="ENSMUST00000114548.8">
    <molecule id="Q8R5M8-3"/>
    <property type="protein sequence ID" value="ENSMUSP00000110195.2"/>
    <property type="gene ID" value="ENSMUSG00000032076.21"/>
</dbReference>
<dbReference type="GeneID" id="54725"/>
<dbReference type="KEGG" id="mmu:54725"/>
<dbReference type="UCSC" id="uc009phn.1">
    <molecule id="Q8R5M8-5"/>
    <property type="organism name" value="mouse"/>
</dbReference>
<dbReference type="UCSC" id="uc009pho.1">
    <molecule id="Q8R5M8-1"/>
    <property type="organism name" value="mouse"/>
</dbReference>
<dbReference type="UCSC" id="uc009phq.1">
    <molecule id="Q8R5M8-3"/>
    <property type="organism name" value="mouse"/>
</dbReference>
<dbReference type="UCSC" id="uc009phr.1">
    <molecule id="Q8R5M8-4"/>
    <property type="organism name" value="mouse"/>
</dbReference>
<dbReference type="UCSC" id="uc009phs.1">
    <molecule id="Q8R5M8-2"/>
    <property type="organism name" value="mouse"/>
</dbReference>
<dbReference type="AGR" id="MGI:1889272"/>
<dbReference type="CTD" id="23705"/>
<dbReference type="MGI" id="MGI:1889272">
    <property type="gene designation" value="Cadm1"/>
</dbReference>
<dbReference type="VEuPathDB" id="HostDB:ENSMUSG00000032076"/>
<dbReference type="eggNOG" id="ENOG502R1KU">
    <property type="taxonomic scope" value="Eukaryota"/>
</dbReference>
<dbReference type="GeneTree" id="ENSGT00940000156093"/>
<dbReference type="HOGENOM" id="CLU_047574_2_1_1"/>
<dbReference type="InParanoid" id="Q8R5M8"/>
<dbReference type="OMA" id="TYDRMYT"/>
<dbReference type="OrthoDB" id="5843397at2759"/>
<dbReference type="PhylomeDB" id="Q8R5M8"/>
<dbReference type="TreeFam" id="TF334317"/>
<dbReference type="Reactome" id="R-MMU-418990">
    <property type="pathway name" value="Adherens junctions interactions"/>
</dbReference>
<dbReference type="Reactome" id="R-MMU-420597">
    <property type="pathway name" value="Nectin/Necl trans heterodimerization"/>
</dbReference>
<dbReference type="BioGRID-ORCS" id="54725">
    <property type="hits" value="2 hits in 79 CRISPR screens"/>
</dbReference>
<dbReference type="ChiTaRS" id="Cadm1">
    <property type="organism name" value="mouse"/>
</dbReference>
<dbReference type="PRO" id="PR:Q8R5M8"/>
<dbReference type="Proteomes" id="UP000000589">
    <property type="component" value="Chromosome 9"/>
</dbReference>
<dbReference type="RNAct" id="Q8R5M8">
    <property type="molecule type" value="protein"/>
</dbReference>
<dbReference type="Bgee" id="ENSMUSG00000032076">
    <property type="expression patterns" value="Expressed in epithelium of lens and 278 other cell types or tissues"/>
</dbReference>
<dbReference type="ExpressionAtlas" id="Q8R5M8">
    <property type="expression patterns" value="baseline and differential"/>
</dbReference>
<dbReference type="GO" id="GO:0030424">
    <property type="term" value="C:axon"/>
    <property type="evidence" value="ECO:0000314"/>
    <property type="project" value="MGI"/>
</dbReference>
<dbReference type="GO" id="GO:0016323">
    <property type="term" value="C:basolateral plasma membrane"/>
    <property type="evidence" value="ECO:0000314"/>
    <property type="project" value="UniProtKB"/>
</dbReference>
<dbReference type="GO" id="GO:0070852">
    <property type="term" value="C:cell body fiber"/>
    <property type="evidence" value="ECO:0000314"/>
    <property type="project" value="MGI"/>
</dbReference>
<dbReference type="GO" id="GO:0005911">
    <property type="term" value="C:cell-cell junction"/>
    <property type="evidence" value="ECO:0000314"/>
    <property type="project" value="UniProtKB"/>
</dbReference>
<dbReference type="GO" id="GO:0030425">
    <property type="term" value="C:dendrite"/>
    <property type="evidence" value="ECO:0000314"/>
    <property type="project" value="MGI"/>
</dbReference>
<dbReference type="GO" id="GO:0098978">
    <property type="term" value="C:glutamatergic synapse"/>
    <property type="evidence" value="ECO:0000314"/>
    <property type="project" value="SynGO"/>
</dbReference>
<dbReference type="GO" id="GO:0005886">
    <property type="term" value="C:plasma membrane"/>
    <property type="evidence" value="ECO:0000314"/>
    <property type="project" value="UniProtKB"/>
</dbReference>
<dbReference type="GO" id="GO:0045211">
    <property type="term" value="C:postsynaptic membrane"/>
    <property type="evidence" value="ECO:0000314"/>
    <property type="project" value="SynGO"/>
</dbReference>
<dbReference type="GO" id="GO:0042734">
    <property type="term" value="C:presynaptic membrane"/>
    <property type="evidence" value="ECO:0000314"/>
    <property type="project" value="SynGO"/>
</dbReference>
<dbReference type="GO" id="GO:0098685">
    <property type="term" value="C:Schaffer collateral - CA1 synapse"/>
    <property type="evidence" value="ECO:0000314"/>
    <property type="project" value="SynGO"/>
</dbReference>
<dbReference type="GO" id="GO:0045202">
    <property type="term" value="C:synapse"/>
    <property type="evidence" value="ECO:0000314"/>
    <property type="project" value="MGI"/>
</dbReference>
<dbReference type="GO" id="GO:0008021">
    <property type="term" value="C:synaptic vesicle"/>
    <property type="evidence" value="ECO:0000314"/>
    <property type="project" value="MGI"/>
</dbReference>
<dbReference type="GO" id="GO:0043196">
    <property type="term" value="C:varicosity"/>
    <property type="evidence" value="ECO:0000314"/>
    <property type="project" value="MGI"/>
</dbReference>
<dbReference type="GO" id="GO:0030165">
    <property type="term" value="F:PDZ domain binding"/>
    <property type="evidence" value="ECO:0000353"/>
    <property type="project" value="UniProtKB"/>
</dbReference>
<dbReference type="GO" id="GO:0042803">
    <property type="term" value="F:protein homodimerization activity"/>
    <property type="evidence" value="ECO:0000314"/>
    <property type="project" value="UniProtKB"/>
</dbReference>
<dbReference type="GO" id="GO:0005102">
    <property type="term" value="F:signaling receptor binding"/>
    <property type="evidence" value="ECO:0000353"/>
    <property type="project" value="UniProtKB"/>
</dbReference>
<dbReference type="GO" id="GO:0006915">
    <property type="term" value="P:apoptotic process"/>
    <property type="evidence" value="ECO:0007669"/>
    <property type="project" value="UniProtKB-KW"/>
</dbReference>
<dbReference type="GO" id="GO:0060348">
    <property type="term" value="P:bone development"/>
    <property type="evidence" value="ECO:0000315"/>
    <property type="project" value="MGI"/>
</dbReference>
<dbReference type="GO" id="GO:0016338">
    <property type="term" value="P:calcium-independent cell-cell adhesion via plasma membrane cell-adhesion molecules"/>
    <property type="evidence" value="ECO:0000314"/>
    <property type="project" value="MGI"/>
</dbReference>
<dbReference type="GO" id="GO:0007155">
    <property type="term" value="P:cell adhesion"/>
    <property type="evidence" value="ECO:0000314"/>
    <property type="project" value="MGI"/>
</dbReference>
<dbReference type="GO" id="GO:0030154">
    <property type="term" value="P:cell differentiation"/>
    <property type="evidence" value="ECO:0007669"/>
    <property type="project" value="UniProtKB-KW"/>
</dbReference>
<dbReference type="GO" id="GO:0008037">
    <property type="term" value="P:cell recognition"/>
    <property type="evidence" value="ECO:0000314"/>
    <property type="project" value="UniProtKB"/>
</dbReference>
<dbReference type="GO" id="GO:0051606">
    <property type="term" value="P:detection of stimulus"/>
    <property type="evidence" value="ECO:0000314"/>
    <property type="project" value="UniProtKB"/>
</dbReference>
<dbReference type="GO" id="GO:0007157">
    <property type="term" value="P:heterophilic cell-cell adhesion via plasma membrane cell adhesion molecules"/>
    <property type="evidence" value="ECO:0000314"/>
    <property type="project" value="UniProtKB"/>
</dbReference>
<dbReference type="GO" id="GO:0007156">
    <property type="term" value="P:homophilic cell adhesion via plasma membrane adhesion molecules"/>
    <property type="evidence" value="ECO:0000314"/>
    <property type="project" value="UniProtKB"/>
</dbReference>
<dbReference type="GO" id="GO:0097021">
    <property type="term" value="P:lymphocyte migration into lymphoid organs"/>
    <property type="evidence" value="ECO:0000315"/>
    <property type="project" value="UniProtKB"/>
</dbReference>
<dbReference type="GO" id="GO:0098880">
    <property type="term" value="P:maintenance of postsynaptic specialization structure"/>
    <property type="evidence" value="ECO:0000314"/>
    <property type="project" value="SynGO"/>
</dbReference>
<dbReference type="GO" id="GO:0045954">
    <property type="term" value="P:positive regulation of natural killer cell mediated cytotoxicity"/>
    <property type="evidence" value="ECO:0000314"/>
    <property type="project" value="UniProtKB"/>
</dbReference>
<dbReference type="GO" id="GO:0099054">
    <property type="term" value="P:presynapse assembly"/>
    <property type="evidence" value="ECO:0000314"/>
    <property type="project" value="SynGO"/>
</dbReference>
<dbReference type="GO" id="GO:0098942">
    <property type="term" value="P:retrograde trans-synaptic signaling by trans-synaptic protein complex"/>
    <property type="evidence" value="ECO:0000314"/>
    <property type="project" value="SynGO"/>
</dbReference>
<dbReference type="GO" id="GO:0007283">
    <property type="term" value="P:spermatogenesis"/>
    <property type="evidence" value="ECO:0007669"/>
    <property type="project" value="UniProtKB-KW"/>
</dbReference>
<dbReference type="GO" id="GO:0042271">
    <property type="term" value="P:susceptibility to natural killer cell mediated cytotoxicity"/>
    <property type="evidence" value="ECO:0000314"/>
    <property type="project" value="UniProtKB"/>
</dbReference>
<dbReference type="GO" id="GO:0007416">
    <property type="term" value="P:synapse assembly"/>
    <property type="evidence" value="ECO:0000314"/>
    <property type="project" value="MGI"/>
</dbReference>
<dbReference type="GO" id="GO:0099560">
    <property type="term" value="P:synaptic membrane adhesion"/>
    <property type="evidence" value="ECO:0000314"/>
    <property type="project" value="SynGO"/>
</dbReference>
<dbReference type="GO" id="GO:0009826">
    <property type="term" value="P:unidimensional cell growth"/>
    <property type="evidence" value="ECO:0000315"/>
    <property type="project" value="MGI"/>
</dbReference>
<dbReference type="CDD" id="cd00096">
    <property type="entry name" value="Ig"/>
    <property type="match status" value="1"/>
</dbReference>
<dbReference type="CDD" id="cd05883">
    <property type="entry name" value="IgI_2_Necl-2"/>
    <property type="match status" value="1"/>
</dbReference>
<dbReference type="CDD" id="cd05881">
    <property type="entry name" value="IgV_1_Necl-2"/>
    <property type="match status" value="1"/>
</dbReference>
<dbReference type="FunFam" id="2.60.40.10:FF:000013">
    <property type="entry name" value="cell adhesion molecule 1 isoform X1"/>
    <property type="match status" value="1"/>
</dbReference>
<dbReference type="FunFam" id="2.60.40.10:FF:000200">
    <property type="entry name" value="cell adhesion molecule 1 isoform X1"/>
    <property type="match status" value="1"/>
</dbReference>
<dbReference type="FunFam" id="2.60.40.10:FF:000184">
    <property type="entry name" value="cell adhesion molecule 1 isoform X2"/>
    <property type="match status" value="1"/>
</dbReference>
<dbReference type="Gene3D" id="2.60.40.10">
    <property type="entry name" value="Immunoglobulins"/>
    <property type="match status" value="3"/>
</dbReference>
<dbReference type="InterPro" id="IPR013162">
    <property type="entry name" value="CD80_C2-set"/>
</dbReference>
<dbReference type="InterPro" id="IPR007110">
    <property type="entry name" value="Ig-like_dom"/>
</dbReference>
<dbReference type="InterPro" id="IPR036179">
    <property type="entry name" value="Ig-like_dom_sf"/>
</dbReference>
<dbReference type="InterPro" id="IPR013783">
    <property type="entry name" value="Ig-like_fold"/>
</dbReference>
<dbReference type="InterPro" id="IPR003599">
    <property type="entry name" value="Ig_sub"/>
</dbReference>
<dbReference type="InterPro" id="IPR003598">
    <property type="entry name" value="Ig_sub2"/>
</dbReference>
<dbReference type="InterPro" id="IPR013106">
    <property type="entry name" value="Ig_V-set"/>
</dbReference>
<dbReference type="InterPro" id="IPR003585">
    <property type="entry name" value="Neurexin-like"/>
</dbReference>
<dbReference type="PANTHER" id="PTHR45889:SF2">
    <property type="entry name" value="CELL ADHESION MOLECULE 1"/>
    <property type="match status" value="1"/>
</dbReference>
<dbReference type="PANTHER" id="PTHR45889">
    <property type="entry name" value="IG-LIKE DOMAIN-CONTAINING PROTEIN"/>
    <property type="match status" value="1"/>
</dbReference>
<dbReference type="Pfam" id="PF08205">
    <property type="entry name" value="C2-set_2"/>
    <property type="match status" value="1"/>
</dbReference>
<dbReference type="Pfam" id="PF13927">
    <property type="entry name" value="Ig_3"/>
    <property type="match status" value="1"/>
</dbReference>
<dbReference type="Pfam" id="PF07686">
    <property type="entry name" value="V-set"/>
    <property type="match status" value="1"/>
</dbReference>
<dbReference type="SMART" id="SM00294">
    <property type="entry name" value="4.1m"/>
    <property type="match status" value="1"/>
</dbReference>
<dbReference type="SMART" id="SM00409">
    <property type="entry name" value="IG"/>
    <property type="match status" value="3"/>
</dbReference>
<dbReference type="SMART" id="SM00408">
    <property type="entry name" value="IGc2"/>
    <property type="match status" value="3"/>
</dbReference>
<dbReference type="SUPFAM" id="SSF48726">
    <property type="entry name" value="Immunoglobulin"/>
    <property type="match status" value="3"/>
</dbReference>
<dbReference type="PROSITE" id="PS50835">
    <property type="entry name" value="IG_LIKE"/>
    <property type="match status" value="3"/>
</dbReference>